<sequence length="274" mass="28806">MADPMGGAGRLPAVFMTPGTSSFTDFLSQSAPHLLPGARGGLPGPVTEVAHGTTIVAVTFPGGVIMAGDRRATQGHMIAQRDVEKVHHADDFSCVGYAGTAGVGAELIRLFQVELEHYEKIEGATLSLDAKANRLAAMVKGNLPMALQGLAVVPLFAGYDPDLDKGRIFSYDIAAAKSEERTYESIGSGSVFAKGSLKKRFRVDLTQDDAVRIAVEALYDAADDDSATGGPDTIRKLYPIVASVTSDGYRRYGDDEVEPVVTAIIADRSTSAGG</sequence>
<accession>Q0RLT7</accession>
<comment type="function">
    <text evidence="1">Component of the proteasome core, a large protease complex with broad specificity involved in protein degradation.</text>
</comment>
<comment type="catalytic activity">
    <reaction evidence="1">
        <text>Cleavage of peptide bonds with very broad specificity.</text>
        <dbReference type="EC" id="3.4.25.1"/>
    </reaction>
</comment>
<comment type="activity regulation">
    <text evidence="1">The formation of the proteasomal ATPase ARC-20S proteasome complex, likely via the docking of the C-termini of ARC into the intersubunit pockets in the alpha-rings, may trigger opening of the gate for substrate entry. Interconversion between the open-gate and close-gate conformations leads to a dynamic regulation of the 20S proteasome proteolysis activity.</text>
</comment>
<comment type="pathway">
    <text evidence="1">Protein degradation; proteasomal Pup-dependent pathway.</text>
</comment>
<comment type="subunit">
    <text evidence="1">The 20S proteasome core is composed of 14 alpha and 14 beta subunits that assemble into four stacked heptameric rings, resulting in a barrel-shaped structure. The two inner rings, each composed of seven catalytic beta subunits, are sandwiched by two outer rings, each composed of seven alpha subunits. The catalytic chamber with the active sites is on the inside of the barrel. Has a gated structure, the ends of the cylinder being occluded by the N-termini of the alpha-subunits. Is capped by the proteasome-associated ATPase, ARC.</text>
</comment>
<comment type="subcellular location">
    <subcellularLocation>
        <location evidence="1">Cytoplasm</location>
    </subcellularLocation>
</comment>
<comment type="similarity">
    <text evidence="1">Belongs to the peptidase T1B family.</text>
</comment>
<comment type="sequence caution" evidence="2">
    <conflict type="erroneous initiation">
        <sequence resource="EMBL-CDS" id="CAJ61517"/>
    </conflict>
    <text>Truncated N-terminus.</text>
</comment>
<feature type="propeptide" id="PRO_0000397504" description="Removed in mature form; by autocatalysis" evidence="1">
    <location>
        <begin position="1"/>
        <end position="52"/>
    </location>
</feature>
<feature type="chain" id="PRO_0000397505" description="Proteasome subunit beta">
    <location>
        <begin position="53"/>
        <end position="274"/>
    </location>
</feature>
<feature type="active site" description="Nucleophile" evidence="1">
    <location>
        <position position="53"/>
    </location>
</feature>
<protein>
    <recommendedName>
        <fullName evidence="1">Proteasome subunit beta</fullName>
        <ecNumber evidence="1">3.4.25.1</ecNumber>
    </recommendedName>
    <alternativeName>
        <fullName evidence="1">20S proteasome beta subunit</fullName>
    </alternativeName>
    <alternativeName>
        <fullName evidence="1">Proteasome core protein PrcB</fullName>
    </alternativeName>
</protein>
<gene>
    <name evidence="1" type="primary">prcB</name>
    <name type="ordered locus">FRAAL2873</name>
</gene>
<proteinExistence type="inferred from homology"/>
<dbReference type="EC" id="3.4.25.1" evidence="1"/>
<dbReference type="EMBL" id="CT573213">
    <property type="protein sequence ID" value="CAJ61517.1"/>
    <property type="status" value="ALT_INIT"/>
    <property type="molecule type" value="Genomic_DNA"/>
</dbReference>
<dbReference type="RefSeq" id="WP_173402688.1">
    <property type="nucleotide sequence ID" value="NC_008278.1"/>
</dbReference>
<dbReference type="SMR" id="Q0RLT7"/>
<dbReference type="STRING" id="326424.FRAAL2873"/>
<dbReference type="MEROPS" id="T01.005"/>
<dbReference type="KEGG" id="fal:FRAAL2873"/>
<dbReference type="eggNOG" id="COG0638">
    <property type="taxonomic scope" value="Bacteria"/>
</dbReference>
<dbReference type="HOGENOM" id="CLU_035750_2_0_11"/>
<dbReference type="UniPathway" id="UPA00997"/>
<dbReference type="Proteomes" id="UP000000657">
    <property type="component" value="Chromosome"/>
</dbReference>
<dbReference type="GO" id="GO:0005737">
    <property type="term" value="C:cytoplasm"/>
    <property type="evidence" value="ECO:0007669"/>
    <property type="project" value="UniProtKB-SubCell"/>
</dbReference>
<dbReference type="GO" id="GO:0019774">
    <property type="term" value="C:proteasome core complex, beta-subunit complex"/>
    <property type="evidence" value="ECO:0007669"/>
    <property type="project" value="UniProtKB-UniRule"/>
</dbReference>
<dbReference type="GO" id="GO:0004298">
    <property type="term" value="F:threonine-type endopeptidase activity"/>
    <property type="evidence" value="ECO:0007669"/>
    <property type="project" value="UniProtKB-UniRule"/>
</dbReference>
<dbReference type="GO" id="GO:0019941">
    <property type="term" value="P:modification-dependent protein catabolic process"/>
    <property type="evidence" value="ECO:0007669"/>
    <property type="project" value="UniProtKB-UniRule"/>
</dbReference>
<dbReference type="GO" id="GO:0010498">
    <property type="term" value="P:proteasomal protein catabolic process"/>
    <property type="evidence" value="ECO:0007669"/>
    <property type="project" value="UniProtKB-UniRule"/>
</dbReference>
<dbReference type="CDD" id="cd01906">
    <property type="entry name" value="proteasome_protease_HslV"/>
    <property type="match status" value="1"/>
</dbReference>
<dbReference type="Gene3D" id="3.60.20.10">
    <property type="entry name" value="Glutamine Phosphoribosylpyrophosphate, subunit 1, domain 1"/>
    <property type="match status" value="1"/>
</dbReference>
<dbReference type="HAMAP" id="MF_02113_B">
    <property type="entry name" value="Proteasome_B_B"/>
    <property type="match status" value="1"/>
</dbReference>
<dbReference type="InterPro" id="IPR029055">
    <property type="entry name" value="Ntn_hydrolases_N"/>
</dbReference>
<dbReference type="InterPro" id="IPR000243">
    <property type="entry name" value="Pept_T1A_subB"/>
</dbReference>
<dbReference type="InterPro" id="IPR001353">
    <property type="entry name" value="Proteasome_sua/b"/>
</dbReference>
<dbReference type="InterPro" id="IPR023333">
    <property type="entry name" value="Proteasome_suB-type"/>
</dbReference>
<dbReference type="InterPro" id="IPR022483">
    <property type="entry name" value="PSB_actinobac"/>
</dbReference>
<dbReference type="NCBIfam" id="TIGR03690">
    <property type="entry name" value="20S_bact_beta"/>
    <property type="match status" value="1"/>
</dbReference>
<dbReference type="PANTHER" id="PTHR32194:SF0">
    <property type="entry name" value="ATP-DEPENDENT PROTEASE SUBUNIT HSLV"/>
    <property type="match status" value="1"/>
</dbReference>
<dbReference type="PANTHER" id="PTHR32194">
    <property type="entry name" value="METALLOPROTEASE TLDD"/>
    <property type="match status" value="1"/>
</dbReference>
<dbReference type="Pfam" id="PF00227">
    <property type="entry name" value="Proteasome"/>
    <property type="match status" value="1"/>
</dbReference>
<dbReference type="PRINTS" id="PR00141">
    <property type="entry name" value="PROTEASOME"/>
</dbReference>
<dbReference type="SUPFAM" id="SSF56235">
    <property type="entry name" value="N-terminal nucleophile aminohydrolases (Ntn hydrolases)"/>
    <property type="match status" value="1"/>
</dbReference>
<dbReference type="PROSITE" id="PS51476">
    <property type="entry name" value="PROTEASOME_BETA_2"/>
    <property type="match status" value="1"/>
</dbReference>
<evidence type="ECO:0000255" key="1">
    <source>
        <dbReference type="HAMAP-Rule" id="MF_02113"/>
    </source>
</evidence>
<evidence type="ECO:0000305" key="2"/>
<name>PSB_FRAAA</name>
<reference key="1">
    <citation type="journal article" date="2007" name="Genome Res.">
        <title>Genome characteristics of facultatively symbiotic Frankia sp. strains reflect host range and host plant biogeography.</title>
        <authorList>
            <person name="Normand P."/>
            <person name="Lapierre P."/>
            <person name="Tisa L.S."/>
            <person name="Gogarten J.P."/>
            <person name="Alloisio N."/>
            <person name="Bagnarol E."/>
            <person name="Bassi C.A."/>
            <person name="Berry A.M."/>
            <person name="Bickhart D.M."/>
            <person name="Choisne N."/>
            <person name="Couloux A."/>
            <person name="Cournoyer B."/>
            <person name="Cruveiller S."/>
            <person name="Daubin V."/>
            <person name="Demange N."/>
            <person name="Francino M.P."/>
            <person name="Goltsman E."/>
            <person name="Huang Y."/>
            <person name="Kopp O.R."/>
            <person name="Labarre L."/>
            <person name="Lapidus A."/>
            <person name="Lavire C."/>
            <person name="Marechal J."/>
            <person name="Martinez M."/>
            <person name="Mastronunzio J.E."/>
            <person name="Mullin B.C."/>
            <person name="Niemann J."/>
            <person name="Pujic P."/>
            <person name="Rawnsley T."/>
            <person name="Rouy Z."/>
            <person name="Schenowitz C."/>
            <person name="Sellstedt A."/>
            <person name="Tavares F."/>
            <person name="Tomkins J.P."/>
            <person name="Vallenet D."/>
            <person name="Valverde C."/>
            <person name="Wall L.G."/>
            <person name="Wang Y."/>
            <person name="Medigue C."/>
            <person name="Benson D.R."/>
        </authorList>
    </citation>
    <scope>NUCLEOTIDE SEQUENCE [LARGE SCALE GENOMIC DNA]</scope>
    <source>
        <strain>DSM 45986 / CECT 9034 / ACN14a</strain>
    </source>
</reference>
<keyword id="KW-0068">Autocatalytic cleavage</keyword>
<keyword id="KW-0963">Cytoplasm</keyword>
<keyword id="KW-0378">Hydrolase</keyword>
<keyword id="KW-0645">Protease</keyword>
<keyword id="KW-0647">Proteasome</keyword>
<keyword id="KW-1185">Reference proteome</keyword>
<keyword id="KW-0888">Threonine protease</keyword>
<keyword id="KW-0865">Zymogen</keyword>
<organism>
    <name type="scientific">Frankia alni (strain DSM 45986 / CECT 9034 / ACN14a)</name>
    <dbReference type="NCBI Taxonomy" id="326424"/>
    <lineage>
        <taxon>Bacteria</taxon>
        <taxon>Bacillati</taxon>
        <taxon>Actinomycetota</taxon>
        <taxon>Actinomycetes</taxon>
        <taxon>Frankiales</taxon>
        <taxon>Frankiaceae</taxon>
        <taxon>Frankia</taxon>
    </lineage>
</organism>